<reference key="1">
    <citation type="submission" date="2005-10" db="EMBL/GenBank/DDBJ databases">
        <title>Complete sequence of Pelobacter carbinolicus DSM 2380.</title>
        <authorList>
            <person name="Copeland A."/>
            <person name="Lucas S."/>
            <person name="Lapidus A."/>
            <person name="Barry K."/>
            <person name="Detter J.C."/>
            <person name="Glavina T."/>
            <person name="Hammon N."/>
            <person name="Israni S."/>
            <person name="Pitluck S."/>
            <person name="Chertkov O."/>
            <person name="Schmutz J."/>
            <person name="Larimer F."/>
            <person name="Land M."/>
            <person name="Kyrpides N."/>
            <person name="Ivanova N."/>
            <person name="Richardson P."/>
        </authorList>
    </citation>
    <scope>NUCLEOTIDE SEQUENCE [LARGE SCALE GENOMIC DNA]</scope>
    <source>
        <strain>DSM 2380 / NBRC 103641 / GraBd1</strain>
    </source>
</reference>
<accession>Q3A2F0</accession>
<organism>
    <name type="scientific">Syntrophotalea carbinolica (strain DSM 2380 / NBRC 103641 / GraBd1)</name>
    <name type="common">Pelobacter carbinolicus</name>
    <dbReference type="NCBI Taxonomy" id="338963"/>
    <lineage>
        <taxon>Bacteria</taxon>
        <taxon>Pseudomonadati</taxon>
        <taxon>Thermodesulfobacteriota</taxon>
        <taxon>Desulfuromonadia</taxon>
        <taxon>Desulfuromonadales</taxon>
        <taxon>Syntrophotaleaceae</taxon>
        <taxon>Syntrophotalea</taxon>
    </lineage>
</organism>
<proteinExistence type="inferred from homology"/>
<comment type="function">
    <text evidence="1">Endonuclease that specifically degrades the RNA of RNA-DNA hybrids.</text>
</comment>
<comment type="catalytic activity">
    <reaction evidence="1">
        <text>Endonucleolytic cleavage to 5'-phosphomonoester.</text>
        <dbReference type="EC" id="3.1.26.4"/>
    </reaction>
</comment>
<comment type="cofactor">
    <cofactor evidence="1">
        <name>Mn(2+)</name>
        <dbReference type="ChEBI" id="CHEBI:29035"/>
    </cofactor>
    <cofactor evidence="1">
        <name>Mg(2+)</name>
        <dbReference type="ChEBI" id="CHEBI:18420"/>
    </cofactor>
    <text evidence="1">Manganese or magnesium. Binds 1 divalent metal ion per monomer in the absence of substrate. May bind a second metal ion after substrate binding.</text>
</comment>
<comment type="subcellular location">
    <subcellularLocation>
        <location evidence="1">Cytoplasm</location>
    </subcellularLocation>
</comment>
<comment type="similarity">
    <text evidence="1">Belongs to the RNase HII family.</text>
</comment>
<gene>
    <name evidence="1" type="primary">rnhB</name>
    <name type="ordered locus">Pcar_2218</name>
</gene>
<dbReference type="EC" id="3.1.26.4" evidence="1"/>
<dbReference type="EMBL" id="CP000142">
    <property type="protein sequence ID" value="ABA89457.1"/>
    <property type="molecule type" value="Genomic_DNA"/>
</dbReference>
<dbReference type="RefSeq" id="WP_011341972.1">
    <property type="nucleotide sequence ID" value="NC_007498.2"/>
</dbReference>
<dbReference type="SMR" id="Q3A2F0"/>
<dbReference type="STRING" id="338963.Pcar_2218"/>
<dbReference type="KEGG" id="pca:Pcar_2218"/>
<dbReference type="eggNOG" id="COG0164">
    <property type="taxonomic scope" value="Bacteria"/>
</dbReference>
<dbReference type="HOGENOM" id="CLU_036532_3_2_7"/>
<dbReference type="OrthoDB" id="9803420at2"/>
<dbReference type="Proteomes" id="UP000002534">
    <property type="component" value="Chromosome"/>
</dbReference>
<dbReference type="GO" id="GO:0005737">
    <property type="term" value="C:cytoplasm"/>
    <property type="evidence" value="ECO:0007669"/>
    <property type="project" value="UniProtKB-SubCell"/>
</dbReference>
<dbReference type="GO" id="GO:0032299">
    <property type="term" value="C:ribonuclease H2 complex"/>
    <property type="evidence" value="ECO:0007669"/>
    <property type="project" value="TreeGrafter"/>
</dbReference>
<dbReference type="GO" id="GO:0030145">
    <property type="term" value="F:manganese ion binding"/>
    <property type="evidence" value="ECO:0007669"/>
    <property type="project" value="UniProtKB-UniRule"/>
</dbReference>
<dbReference type="GO" id="GO:0003723">
    <property type="term" value="F:RNA binding"/>
    <property type="evidence" value="ECO:0007669"/>
    <property type="project" value="InterPro"/>
</dbReference>
<dbReference type="GO" id="GO:0004523">
    <property type="term" value="F:RNA-DNA hybrid ribonuclease activity"/>
    <property type="evidence" value="ECO:0007669"/>
    <property type="project" value="UniProtKB-UniRule"/>
</dbReference>
<dbReference type="GO" id="GO:0043137">
    <property type="term" value="P:DNA replication, removal of RNA primer"/>
    <property type="evidence" value="ECO:0007669"/>
    <property type="project" value="TreeGrafter"/>
</dbReference>
<dbReference type="GO" id="GO:0006298">
    <property type="term" value="P:mismatch repair"/>
    <property type="evidence" value="ECO:0007669"/>
    <property type="project" value="TreeGrafter"/>
</dbReference>
<dbReference type="CDD" id="cd07182">
    <property type="entry name" value="RNase_HII_bacteria_HII_like"/>
    <property type="match status" value="1"/>
</dbReference>
<dbReference type="FunFam" id="3.30.420.10:FF:000006">
    <property type="entry name" value="Ribonuclease HII"/>
    <property type="match status" value="1"/>
</dbReference>
<dbReference type="Gene3D" id="3.30.420.10">
    <property type="entry name" value="Ribonuclease H-like superfamily/Ribonuclease H"/>
    <property type="match status" value="1"/>
</dbReference>
<dbReference type="HAMAP" id="MF_00052_B">
    <property type="entry name" value="RNase_HII_B"/>
    <property type="match status" value="1"/>
</dbReference>
<dbReference type="InterPro" id="IPR022898">
    <property type="entry name" value="RNase_HII"/>
</dbReference>
<dbReference type="InterPro" id="IPR001352">
    <property type="entry name" value="RNase_HII/HIII"/>
</dbReference>
<dbReference type="InterPro" id="IPR024567">
    <property type="entry name" value="RNase_HII/HIII_dom"/>
</dbReference>
<dbReference type="InterPro" id="IPR012337">
    <property type="entry name" value="RNaseH-like_sf"/>
</dbReference>
<dbReference type="InterPro" id="IPR036397">
    <property type="entry name" value="RNaseH_sf"/>
</dbReference>
<dbReference type="NCBIfam" id="NF000594">
    <property type="entry name" value="PRK00015.1-1"/>
    <property type="match status" value="1"/>
</dbReference>
<dbReference type="NCBIfam" id="NF000595">
    <property type="entry name" value="PRK00015.1-3"/>
    <property type="match status" value="1"/>
</dbReference>
<dbReference type="PANTHER" id="PTHR10954">
    <property type="entry name" value="RIBONUCLEASE H2 SUBUNIT A"/>
    <property type="match status" value="1"/>
</dbReference>
<dbReference type="PANTHER" id="PTHR10954:SF18">
    <property type="entry name" value="RIBONUCLEASE HII"/>
    <property type="match status" value="1"/>
</dbReference>
<dbReference type="Pfam" id="PF01351">
    <property type="entry name" value="RNase_HII"/>
    <property type="match status" value="1"/>
</dbReference>
<dbReference type="SUPFAM" id="SSF53098">
    <property type="entry name" value="Ribonuclease H-like"/>
    <property type="match status" value="1"/>
</dbReference>
<dbReference type="PROSITE" id="PS51975">
    <property type="entry name" value="RNASE_H_2"/>
    <property type="match status" value="1"/>
</dbReference>
<sequence length="209" mass="22788">MLELFPSEDVSPLYFEQRLSRQGYRRIAGIDEAGRGPLAGPVVAAAVVLPPVFDLPGLNDSKKISAKLREKLFPQIRRQALDYGIGLASAQEVDGLNVLQATLLAMRRALDRLAQPADYLLVDGITPVPLPLPQKTLKQGDSRSLSIAAASVLAKVVRDRLMTTYDARFPEYGFAGHKGYGSAAHRAAIARLGPCPLHRATFRGVREYL</sequence>
<keyword id="KW-0963">Cytoplasm</keyword>
<keyword id="KW-0255">Endonuclease</keyword>
<keyword id="KW-0378">Hydrolase</keyword>
<keyword id="KW-0464">Manganese</keyword>
<keyword id="KW-0479">Metal-binding</keyword>
<keyword id="KW-0540">Nuclease</keyword>
<keyword id="KW-1185">Reference proteome</keyword>
<name>RNH2_SYNC1</name>
<evidence type="ECO:0000255" key="1">
    <source>
        <dbReference type="HAMAP-Rule" id="MF_00052"/>
    </source>
</evidence>
<evidence type="ECO:0000255" key="2">
    <source>
        <dbReference type="PROSITE-ProRule" id="PRU01319"/>
    </source>
</evidence>
<protein>
    <recommendedName>
        <fullName evidence="1">Ribonuclease HII</fullName>
        <shortName evidence="1">RNase HII</shortName>
        <ecNumber evidence="1">3.1.26.4</ecNumber>
    </recommendedName>
</protein>
<feature type="chain" id="PRO_0000235747" description="Ribonuclease HII">
    <location>
        <begin position="1"/>
        <end position="209"/>
    </location>
</feature>
<feature type="domain" description="RNase H type-2" evidence="2">
    <location>
        <begin position="25"/>
        <end position="209"/>
    </location>
</feature>
<feature type="binding site" evidence="1">
    <location>
        <position position="31"/>
    </location>
    <ligand>
        <name>a divalent metal cation</name>
        <dbReference type="ChEBI" id="CHEBI:60240"/>
    </ligand>
</feature>
<feature type="binding site" evidence="1">
    <location>
        <position position="32"/>
    </location>
    <ligand>
        <name>a divalent metal cation</name>
        <dbReference type="ChEBI" id="CHEBI:60240"/>
    </ligand>
</feature>
<feature type="binding site" evidence="1">
    <location>
        <position position="123"/>
    </location>
    <ligand>
        <name>a divalent metal cation</name>
        <dbReference type="ChEBI" id="CHEBI:60240"/>
    </ligand>
</feature>